<accession>C4XJ76</accession>
<comment type="function">
    <text evidence="1">Required for rescue of stalled ribosomes mediated by trans-translation. Binds to transfer-messenger RNA (tmRNA), required for stable association of tmRNA with ribosomes. tmRNA and SmpB together mimic tRNA shape, replacing the anticodon stem-loop with SmpB. tmRNA is encoded by the ssrA gene; the 2 termini fold to resemble tRNA(Ala) and it encodes a 'tag peptide', a short internal open reading frame. During trans-translation Ala-aminoacylated tmRNA acts like a tRNA, entering the A-site of stalled ribosomes, displacing the stalled mRNA. The ribosome then switches to translate the ORF on the tmRNA; the nascent peptide is terminated with the 'tag peptide' encoded by the tmRNA and targeted for degradation. The ribosome is freed to recommence translation, which seems to be the essential function of trans-translation.</text>
</comment>
<comment type="subcellular location">
    <subcellularLocation>
        <location evidence="1">Cytoplasm</location>
    </subcellularLocation>
    <text evidence="1">The tmRNA-SmpB complex associates with stalled 70S ribosomes.</text>
</comment>
<comment type="similarity">
    <text evidence="1">Belongs to the SmpB family.</text>
</comment>
<evidence type="ECO:0000255" key="1">
    <source>
        <dbReference type="HAMAP-Rule" id="MF_00023"/>
    </source>
</evidence>
<sequence length="154" mass="17479">MAAKESGEKLVALNKKARHLYEFLEKYEAGLVLMGSEVKSLRLGRISFKDGYVKFQDGEAFMIGVHIAPYENAGYAGHEPERPRKLLLHAAEINAMRVKVEQKGLTVVPVRVYFKNGRAKVEIALARGKKVFDRRDDLKSRDLDRDAARELARH</sequence>
<dbReference type="EMBL" id="AP010904">
    <property type="protein sequence ID" value="BAH74240.1"/>
    <property type="molecule type" value="Genomic_DNA"/>
</dbReference>
<dbReference type="RefSeq" id="WP_012750315.1">
    <property type="nucleotide sequence ID" value="NC_012796.1"/>
</dbReference>
<dbReference type="SMR" id="C4XJ76"/>
<dbReference type="STRING" id="573370.DMR_07490"/>
<dbReference type="KEGG" id="dma:DMR_07490"/>
<dbReference type="eggNOG" id="COG0691">
    <property type="taxonomic scope" value="Bacteria"/>
</dbReference>
<dbReference type="HOGENOM" id="CLU_108953_0_0_7"/>
<dbReference type="OrthoDB" id="9805462at2"/>
<dbReference type="Proteomes" id="UP000009071">
    <property type="component" value="Chromosome"/>
</dbReference>
<dbReference type="GO" id="GO:0005829">
    <property type="term" value="C:cytosol"/>
    <property type="evidence" value="ECO:0007669"/>
    <property type="project" value="TreeGrafter"/>
</dbReference>
<dbReference type="GO" id="GO:0003723">
    <property type="term" value="F:RNA binding"/>
    <property type="evidence" value="ECO:0007669"/>
    <property type="project" value="UniProtKB-UniRule"/>
</dbReference>
<dbReference type="GO" id="GO:0070929">
    <property type="term" value="P:trans-translation"/>
    <property type="evidence" value="ECO:0007669"/>
    <property type="project" value="UniProtKB-UniRule"/>
</dbReference>
<dbReference type="CDD" id="cd09294">
    <property type="entry name" value="SmpB"/>
    <property type="match status" value="1"/>
</dbReference>
<dbReference type="Gene3D" id="2.40.280.10">
    <property type="match status" value="1"/>
</dbReference>
<dbReference type="HAMAP" id="MF_00023">
    <property type="entry name" value="SmpB"/>
    <property type="match status" value="1"/>
</dbReference>
<dbReference type="InterPro" id="IPR023620">
    <property type="entry name" value="SmpB"/>
</dbReference>
<dbReference type="InterPro" id="IPR000037">
    <property type="entry name" value="SsrA-bd_prot"/>
</dbReference>
<dbReference type="InterPro" id="IPR020081">
    <property type="entry name" value="SsrA-bd_prot_CS"/>
</dbReference>
<dbReference type="NCBIfam" id="NF003843">
    <property type="entry name" value="PRK05422.1"/>
    <property type="match status" value="1"/>
</dbReference>
<dbReference type="NCBIfam" id="TIGR00086">
    <property type="entry name" value="smpB"/>
    <property type="match status" value="1"/>
</dbReference>
<dbReference type="PANTHER" id="PTHR30308:SF2">
    <property type="entry name" value="SSRA-BINDING PROTEIN"/>
    <property type="match status" value="1"/>
</dbReference>
<dbReference type="PANTHER" id="PTHR30308">
    <property type="entry name" value="TMRNA-BINDING COMPONENT OF TRANS-TRANSLATION TAGGING COMPLEX"/>
    <property type="match status" value="1"/>
</dbReference>
<dbReference type="Pfam" id="PF01668">
    <property type="entry name" value="SmpB"/>
    <property type="match status" value="1"/>
</dbReference>
<dbReference type="SUPFAM" id="SSF74982">
    <property type="entry name" value="Small protein B (SmpB)"/>
    <property type="match status" value="1"/>
</dbReference>
<dbReference type="PROSITE" id="PS01317">
    <property type="entry name" value="SSRP"/>
    <property type="match status" value="1"/>
</dbReference>
<reference key="1">
    <citation type="journal article" date="2009" name="Genome Res.">
        <title>Whole genome sequence of Desulfovibrio magneticus strain RS-1 revealed common gene clusters in magnetotactic bacteria.</title>
        <authorList>
            <person name="Nakazawa H."/>
            <person name="Arakaki A."/>
            <person name="Narita-Yamada S."/>
            <person name="Yashiro I."/>
            <person name="Jinno K."/>
            <person name="Aoki N."/>
            <person name="Tsuruyama A."/>
            <person name="Okamura Y."/>
            <person name="Tanikawa S."/>
            <person name="Fujita N."/>
            <person name="Takeyama H."/>
            <person name="Matsunaga T."/>
        </authorList>
    </citation>
    <scope>NUCLEOTIDE SEQUENCE [LARGE SCALE GENOMIC DNA]</scope>
    <source>
        <strain>ATCC 700980 / DSM 13731 / RS-1</strain>
    </source>
</reference>
<gene>
    <name evidence="1" type="primary">smpB</name>
    <name type="ordered locus">DMR_07490</name>
</gene>
<protein>
    <recommendedName>
        <fullName evidence="1">SsrA-binding protein</fullName>
    </recommendedName>
    <alternativeName>
        <fullName evidence="1">Small protein B</fullName>
    </alternativeName>
</protein>
<organism>
    <name type="scientific">Solidesulfovibrio magneticus (strain ATCC 700980 / DSM 13731 / RS-1)</name>
    <name type="common">Desulfovibrio magneticus</name>
    <dbReference type="NCBI Taxonomy" id="573370"/>
    <lineage>
        <taxon>Bacteria</taxon>
        <taxon>Pseudomonadati</taxon>
        <taxon>Thermodesulfobacteriota</taxon>
        <taxon>Desulfovibrionia</taxon>
        <taxon>Desulfovibrionales</taxon>
        <taxon>Desulfovibrionaceae</taxon>
        <taxon>Solidesulfovibrio</taxon>
    </lineage>
</organism>
<proteinExistence type="inferred from homology"/>
<name>SSRP_SOLM1</name>
<feature type="chain" id="PRO_1000201931" description="SsrA-binding protein">
    <location>
        <begin position="1"/>
        <end position="154"/>
    </location>
</feature>
<keyword id="KW-0963">Cytoplasm</keyword>
<keyword id="KW-0694">RNA-binding</keyword>